<gene>
    <name type="primary">XYN4</name>
</gene>
<keyword id="KW-0119">Carbohydrate metabolism</keyword>
<keyword id="KW-0325">Glycoprotein</keyword>
<keyword id="KW-0326">Glycosidase</keyword>
<keyword id="KW-0378">Hydrolase</keyword>
<keyword id="KW-0624">Polysaccharide degradation</keyword>
<keyword id="KW-0964">Secreted</keyword>
<keyword id="KW-0732">Signal</keyword>
<keyword id="KW-0858">Xylan degradation</keyword>
<comment type="function">
    <text evidence="1 5">Endo-1,4-beta-xylanase involved in the hydrolysis of xylan, a major structural heterogeneous polysaccharide found in plant biomass representing the second most abundant polysaccharide in the biosphere, after cellulose.</text>
</comment>
<comment type="catalytic activity">
    <reaction>
        <text>Endohydrolysis of (1-&gt;4)-beta-D-xylosidic linkages in xylans.</text>
        <dbReference type="EC" id="3.2.1.8"/>
    </reaction>
</comment>
<comment type="biophysicochemical properties">
    <phDependence>
        <text evidence="5">Optimum pH is 4.0.</text>
    </phDependence>
    <temperatureDependence>
        <text evidence="5">Optimum temperature is 60 degrees Celsius.</text>
    </temperatureDependence>
</comment>
<comment type="pathway">
    <text>Glycan degradation; xylan degradation.</text>
</comment>
<comment type="subcellular location">
    <subcellularLocation>
        <location evidence="1">Secreted</location>
    </subcellularLocation>
</comment>
<comment type="similarity">
    <text evidence="6">Belongs to the glycosyl hydrolase 11 (cellulase G) family.</text>
</comment>
<comment type="sequence caution" evidence="6">
    <conflict type="frameshift">
        <sequence resource="EMBL-CDS" id="AAA99066"/>
    </conflict>
</comment>
<name>XYN4_ASPNG</name>
<proteinExistence type="evidence at protein level"/>
<organism>
    <name type="scientific">Aspergillus niger</name>
    <dbReference type="NCBI Taxonomy" id="5061"/>
    <lineage>
        <taxon>Eukaryota</taxon>
        <taxon>Fungi</taxon>
        <taxon>Dikarya</taxon>
        <taxon>Ascomycota</taxon>
        <taxon>Pezizomycotina</taxon>
        <taxon>Eurotiomycetes</taxon>
        <taxon>Eurotiomycetidae</taxon>
        <taxon>Eurotiales</taxon>
        <taxon>Aspergillaceae</taxon>
        <taxon>Aspergillus</taxon>
        <taxon>Aspergillus subgen. Circumdati</taxon>
    </lineage>
</organism>
<protein>
    <recommendedName>
        <fullName>Endo-1,4-beta-xylanase 4</fullName>
        <shortName>Xylanase 4</shortName>
        <ecNumber>3.2.1.8</ecNumber>
    </recommendedName>
    <alternativeName>
        <fullName>1,4-beta-D-xylan xylanohydrolase 4</fullName>
    </alternativeName>
</protein>
<evidence type="ECO:0000250" key="1"/>
<evidence type="ECO:0000255" key="2"/>
<evidence type="ECO:0000255" key="3">
    <source>
        <dbReference type="PROSITE-ProRule" id="PRU01097"/>
    </source>
</evidence>
<evidence type="ECO:0000255" key="4">
    <source>
        <dbReference type="PROSITE-ProRule" id="PRU10062"/>
    </source>
</evidence>
<evidence type="ECO:0000269" key="5">
    <source ref="1"/>
</evidence>
<evidence type="ECO:0000305" key="6"/>
<accession>Q12550</accession>
<dbReference type="EC" id="3.2.1.8"/>
<dbReference type="EMBL" id="U39785">
    <property type="protein sequence ID" value="AAA99066.1"/>
    <property type="status" value="ALT_FRAME"/>
    <property type="molecule type" value="mRNA"/>
</dbReference>
<dbReference type="SMR" id="Q12550"/>
<dbReference type="CAZy" id="GH11">
    <property type="family name" value="Glycoside Hydrolase Family 11"/>
</dbReference>
<dbReference type="GlyCosmos" id="Q12550">
    <property type="glycosylation" value="1 site, No reported glycans"/>
</dbReference>
<dbReference type="VEuPathDB" id="FungiDB:An14g07390"/>
<dbReference type="VEuPathDB" id="FungiDB:ASPNIDRAFT2_1101058"/>
<dbReference type="VEuPathDB" id="FungiDB:ATCC64974_22790"/>
<dbReference type="VEuPathDB" id="FungiDB:M747DRAFT_300402"/>
<dbReference type="UniPathway" id="UPA00114"/>
<dbReference type="GO" id="GO:0005576">
    <property type="term" value="C:extracellular region"/>
    <property type="evidence" value="ECO:0007669"/>
    <property type="project" value="UniProtKB-SubCell"/>
</dbReference>
<dbReference type="GO" id="GO:0031176">
    <property type="term" value="F:endo-1,4-beta-xylanase activity"/>
    <property type="evidence" value="ECO:0000314"/>
    <property type="project" value="UniProtKB"/>
</dbReference>
<dbReference type="GO" id="GO:0045493">
    <property type="term" value="P:xylan catabolic process"/>
    <property type="evidence" value="ECO:0000314"/>
    <property type="project" value="UniProtKB"/>
</dbReference>
<dbReference type="FunFam" id="2.60.120.180:FF:000002">
    <property type="entry name" value="Endo-1,4-beta-xylanase A"/>
    <property type="match status" value="1"/>
</dbReference>
<dbReference type="Gene3D" id="2.60.120.180">
    <property type="match status" value="1"/>
</dbReference>
<dbReference type="InterPro" id="IPR013320">
    <property type="entry name" value="ConA-like_dom_sf"/>
</dbReference>
<dbReference type="InterPro" id="IPR013319">
    <property type="entry name" value="GH11/12"/>
</dbReference>
<dbReference type="InterPro" id="IPR018208">
    <property type="entry name" value="GH11_AS_1"/>
</dbReference>
<dbReference type="InterPro" id="IPR033123">
    <property type="entry name" value="GH11_dom"/>
</dbReference>
<dbReference type="InterPro" id="IPR001137">
    <property type="entry name" value="Glyco_hydro_11"/>
</dbReference>
<dbReference type="PANTHER" id="PTHR46828">
    <property type="entry name" value="ENDO-1,4-BETA-XYLANASE A-RELATED"/>
    <property type="match status" value="1"/>
</dbReference>
<dbReference type="PANTHER" id="PTHR46828:SF2">
    <property type="entry name" value="ENDO-1,4-BETA-XYLANASE A-RELATED"/>
    <property type="match status" value="1"/>
</dbReference>
<dbReference type="Pfam" id="PF00457">
    <property type="entry name" value="Glyco_hydro_11"/>
    <property type="match status" value="1"/>
</dbReference>
<dbReference type="PRINTS" id="PR00911">
    <property type="entry name" value="GLHYDRLASE11"/>
</dbReference>
<dbReference type="SUPFAM" id="SSF49899">
    <property type="entry name" value="Concanavalin A-like lectins/glucanases"/>
    <property type="match status" value="1"/>
</dbReference>
<dbReference type="PROSITE" id="PS00776">
    <property type="entry name" value="GH11_1"/>
    <property type="match status" value="1"/>
</dbReference>
<dbReference type="PROSITE" id="PS51761">
    <property type="entry name" value="GH11_3"/>
    <property type="match status" value="1"/>
</dbReference>
<reference key="1">
    <citation type="journal article" date="1997" name="Biotechnol. Lett.">
        <title>Cloning of two beta-xylanase-encoding genes from Aspergillus niger and their expression in Saccharomyces cerevisiae.</title>
        <authorList>
            <person name="Luttig M."/>
            <person name="Pretorius I.S."/>
            <person name="van Zyl W.H."/>
        </authorList>
    </citation>
    <scope>NUCLEOTIDE SEQUENCE [MRNA]</scope>
    <scope>FUNCTION</scope>
    <scope>BIOPHYSICOCHEMICAL PROPERTIES</scope>
    <source>
        <strain>ATCC 90196 / Alo MP-22</strain>
    </source>
</reference>
<sequence>MKVTAAFAGLLVTAFAPPVPEPVLVSRSAGINYVQNYNGNLGDFTYDESAGTFSMYWEDGVSSDFVVGLGWTTGSSNAITYSAEYSASGSSSYLAVYGWVNLSQAEYYIVEDYGDYNPCSSATSLGTEYSDGSTYQVCTDTRTNEPSITGTSTFTQYFSVRESTRTSGTVTVAIHFNFWAQHGFGNSDFNYQVMAVEAWSGACSASVTISS</sequence>
<feature type="signal peptide" evidence="2">
    <location>
        <begin position="1"/>
        <end position="16"/>
    </location>
</feature>
<feature type="chain" id="PRO_0000393171" description="Endo-1,4-beta-xylanase 4">
    <location>
        <begin position="17"/>
        <end position="211"/>
    </location>
</feature>
<feature type="domain" description="GH11" evidence="3">
    <location>
        <begin position="19"/>
        <end position="210"/>
    </location>
</feature>
<feature type="active site" description="Nucleophile" evidence="4">
    <location>
        <position position="106"/>
    </location>
</feature>
<feature type="active site" description="Proton donor" evidence="1">
    <location>
        <position position="197"/>
    </location>
</feature>
<feature type="glycosylation site" description="N-linked (GlcNAc...) asparagine" evidence="2">
    <location>
        <position position="101"/>
    </location>
</feature>